<sequence>MDYDFKAKLAAERERVEDLFEYEGCKVGRGTYGHVYKARRKDGKDEKEYALKQIEGTGISMSACREIALLRELKHPNVIALQKVFLSHSDRKVWLLFDYAEHDLWHIIKFHRASKANKKPMQLPRSMVKSLLYQILDGIHYLHANWVLHRDLKPANILVMGEGPERGRVKIADMGFARLFNSPLKPLADLDPVVVTFWYRAPELLLGARHYTKAIDIWAIGCIFAELLTSEPIFHCRQEDIKTSNPFHHDQLDRIFSVMGFPADKDWEDIRKMPEYPTLQKDFRRTTYANSSLIKYMEKHKVKPDSKVFLLLQKLLTMDPTKRITSEQALQDPYFQEDPLPTLDVFAGCQIPYPKREFLNEDDPEEKGDKNQQQQQNQHQQPTAPPQQAAAPPQAPPPQQNSTQTNGTAGGAGAGVGGTGAGLQHSQDSSLNQVPPNKKPRLGPSGANSGGPVMPSDYQHSSSRLNYQSSVQGSSQSQSTLGYSSSSQQSSQYHPSHQAHRY</sequence>
<organism>
    <name type="scientific">Homo sapiens</name>
    <name type="common">Human</name>
    <dbReference type="NCBI Taxonomy" id="9606"/>
    <lineage>
        <taxon>Eukaryota</taxon>
        <taxon>Metazoa</taxon>
        <taxon>Chordata</taxon>
        <taxon>Craniata</taxon>
        <taxon>Vertebrata</taxon>
        <taxon>Euteleostomi</taxon>
        <taxon>Mammalia</taxon>
        <taxon>Eutheria</taxon>
        <taxon>Euarchontoglires</taxon>
        <taxon>Primates</taxon>
        <taxon>Haplorrhini</taxon>
        <taxon>Catarrhini</taxon>
        <taxon>Hominidae</taxon>
        <taxon>Homo</taxon>
    </lineage>
</organism>
<proteinExistence type="evidence at protein level"/>
<protein>
    <recommendedName>
        <fullName>Cyclin-dependent kinase 19</fullName>
        <ecNumber>2.7.11.22</ecNumber>
    </recommendedName>
    <alternativeName>
        <fullName>CDC2-related protein kinase 6</fullName>
    </alternativeName>
    <alternativeName>
        <fullName>Cell division cycle 2-like protein kinase 6</fullName>
    </alternativeName>
    <alternativeName>
        <fullName>Cell division protein kinase 19</fullName>
    </alternativeName>
    <alternativeName>
        <fullName>Cyclin-dependent kinase 11</fullName>
    </alternativeName>
    <alternativeName>
        <fullName>Death-preventing kinase</fullName>
    </alternativeName>
</protein>
<evidence type="ECO:0000255" key="1">
    <source>
        <dbReference type="PROSITE-ProRule" id="PRU00159"/>
    </source>
</evidence>
<evidence type="ECO:0000255" key="2">
    <source>
        <dbReference type="PROSITE-ProRule" id="PRU10027"/>
    </source>
</evidence>
<evidence type="ECO:0000256" key="3">
    <source>
        <dbReference type="SAM" id="MobiDB-lite"/>
    </source>
</evidence>
<evidence type="ECO:0000269" key="4">
    <source>
    </source>
</evidence>
<evidence type="ECO:0000269" key="5">
    <source>
    </source>
</evidence>
<evidence type="ECO:0000269" key="6">
    <source>
    </source>
</evidence>
<evidence type="ECO:0000303" key="7">
    <source>
    </source>
</evidence>
<evidence type="ECO:0000305" key="8"/>
<evidence type="ECO:0007744" key="9">
    <source>
    </source>
</evidence>
<evidence type="ECO:0007744" key="10">
    <source>
    </source>
</evidence>
<evidence type="ECO:0007744" key="11">
    <source>
    </source>
</evidence>
<accession>Q9BWU1</accession>
<accession>Q5JQZ7</accession>
<accession>Q5JR00</accession>
<accession>Q8TC78</accession>
<accession>Q9UPX2</accession>
<comment type="catalytic activity">
    <reaction>
        <text>L-seryl-[protein] + ATP = O-phospho-L-seryl-[protein] + ADP + H(+)</text>
        <dbReference type="Rhea" id="RHEA:17989"/>
        <dbReference type="Rhea" id="RHEA-COMP:9863"/>
        <dbReference type="Rhea" id="RHEA-COMP:11604"/>
        <dbReference type="ChEBI" id="CHEBI:15378"/>
        <dbReference type="ChEBI" id="CHEBI:29999"/>
        <dbReference type="ChEBI" id="CHEBI:30616"/>
        <dbReference type="ChEBI" id="CHEBI:83421"/>
        <dbReference type="ChEBI" id="CHEBI:456216"/>
        <dbReference type="EC" id="2.7.11.22"/>
    </reaction>
</comment>
<comment type="catalytic activity">
    <reaction>
        <text>L-threonyl-[protein] + ATP = O-phospho-L-threonyl-[protein] + ADP + H(+)</text>
        <dbReference type="Rhea" id="RHEA:46608"/>
        <dbReference type="Rhea" id="RHEA-COMP:11060"/>
        <dbReference type="Rhea" id="RHEA-COMP:11605"/>
        <dbReference type="ChEBI" id="CHEBI:15378"/>
        <dbReference type="ChEBI" id="CHEBI:30013"/>
        <dbReference type="ChEBI" id="CHEBI:30616"/>
        <dbReference type="ChEBI" id="CHEBI:61977"/>
        <dbReference type="ChEBI" id="CHEBI:456216"/>
        <dbReference type="EC" id="2.7.11.22"/>
    </reaction>
</comment>
<comment type="subcellular location">
    <subcellularLocation>
        <location evidence="4">Cytoplasm</location>
    </subcellularLocation>
    <subcellularLocation>
        <location evidence="4">Cytoplasm</location>
        <location evidence="4">Perinuclear region</location>
    </subcellularLocation>
    <subcellularLocation>
        <location evidence="4">Nucleus</location>
    </subcellularLocation>
</comment>
<comment type="alternative products">
    <event type="alternative splicing"/>
    <isoform>
        <id>Q9BWU1-1</id>
        <name>1</name>
        <sequence type="displayed"/>
    </isoform>
    <isoform>
        <id>Q9BWU1-2</id>
        <name>2</name>
        <sequence type="described" ref="VSP_015857"/>
    </isoform>
</comment>
<comment type="disease" evidence="4 5 6">
    <disease id="DI-05860">
        <name>Developmental and epileptic encephalopathy 87</name>
        <acronym>DEE87</acronym>
        <description>A form of epileptic encephalopathy, a heterogeneous group of severe early-onset epilepsies characterized by refractory seizures, neurodevelopmental impairment, and poor prognosis. Development is normal prior to seizure onset, after which cognitive and motor delays become apparent. DEE87 inheritance is autosomal dominant.</description>
        <dbReference type="MIM" id="618916"/>
    </disease>
    <text>The disease is caused by variants affecting the gene represented in this entry.</text>
</comment>
<comment type="similarity">
    <text evidence="8">Belongs to the protein kinase superfamily. CMGC Ser/Thr protein kinase family. CDC2/CDKX subfamily.</text>
</comment>
<comment type="sequence caution" evidence="8">
    <conflict type="erroneous initiation">
        <sequence resource="EMBL-CDS" id="AAH24247"/>
    </conflict>
</comment>
<feature type="chain" id="PRO_0000085713" description="Cyclin-dependent kinase 19">
    <location>
        <begin position="1"/>
        <end position="502"/>
    </location>
</feature>
<feature type="domain" description="Protein kinase" evidence="1">
    <location>
        <begin position="21"/>
        <end position="335"/>
    </location>
</feature>
<feature type="region of interest" description="Disordered" evidence="3">
    <location>
        <begin position="359"/>
        <end position="502"/>
    </location>
</feature>
<feature type="compositionally biased region" description="Low complexity" evidence="3">
    <location>
        <begin position="371"/>
        <end position="392"/>
    </location>
</feature>
<feature type="compositionally biased region" description="Gly residues" evidence="3">
    <location>
        <begin position="408"/>
        <end position="421"/>
    </location>
</feature>
<feature type="compositionally biased region" description="Polar residues" evidence="3">
    <location>
        <begin position="424"/>
        <end position="435"/>
    </location>
</feature>
<feature type="compositionally biased region" description="Polar residues" evidence="3">
    <location>
        <begin position="458"/>
        <end position="467"/>
    </location>
</feature>
<feature type="compositionally biased region" description="Low complexity" evidence="3">
    <location>
        <begin position="468"/>
        <end position="496"/>
    </location>
</feature>
<feature type="active site" description="Proton acceptor" evidence="1 2">
    <location>
        <position position="151"/>
    </location>
</feature>
<feature type="binding site" evidence="1">
    <location>
        <begin position="27"/>
        <end position="35"/>
    </location>
    <ligand>
        <name>ATP</name>
        <dbReference type="ChEBI" id="CHEBI:30616"/>
    </ligand>
</feature>
<feature type="binding site" evidence="1">
    <location>
        <position position="52"/>
    </location>
    <ligand>
        <name>ATP</name>
        <dbReference type="ChEBI" id="CHEBI:30616"/>
    </ligand>
</feature>
<feature type="modified residue" description="N-acetylmethionine" evidence="11">
    <location>
        <position position="1"/>
    </location>
</feature>
<feature type="modified residue" description="Phosphoserine" evidence="9 10">
    <location>
        <position position="449"/>
    </location>
</feature>
<feature type="splice variant" id="VSP_015857" description="In isoform 2." evidence="7">
    <location>
        <begin position="1"/>
        <end position="60"/>
    </location>
</feature>
<feature type="sequence variant" id="VAR_084392" description="In DEE87; dbSNP:rs1783518890." evidence="6">
    <original>G</original>
    <variation>A</variation>
    <location>
        <position position="28"/>
    </location>
</feature>
<feature type="sequence variant" id="VAR_084393" description="In DEE87; decreased protein kinase activity; dbSNP:rs1783519120." evidence="6">
    <original>G</original>
    <variation>R</variation>
    <location>
        <position position="28"/>
    </location>
</feature>
<feature type="sequence variant" id="VAR_084394" description="In DEE87; dbSNP:rs1783517622." evidence="6">
    <original>Y</original>
    <variation>C</variation>
    <location>
        <position position="32"/>
    </location>
</feature>
<feature type="sequence variant" id="VAR_084395" description="In DEE87; fails to rescue neurologic phenotypes in a Drosophila model system; increased protein kinase activity; dbSNP:rs1236246272." evidence="4 5 6">
    <original>Y</original>
    <variation>H</variation>
    <location>
        <position position="32"/>
    </location>
</feature>
<feature type="sequence variant" id="VAR_084396" description="In DEE87; fails to rescue neurologic phenotypes in a Drosophila model system; dbSNP:rs1779473650." evidence="4">
    <original>T</original>
    <variation>A</variation>
    <location>
        <position position="196"/>
    </location>
</feature>
<feature type="sequence variant" id="VAR_084397" description="In DEE87; dbSNP:rs1779473436." evidence="6">
    <original>F</original>
    <variation>L</variation>
    <location>
        <position position="197"/>
    </location>
</feature>
<feature type="sequence variant" id="VAR_084398" description="In DEE87; dbSNP:rs1779473213." evidence="6">
    <original>W</original>
    <variation>C</variation>
    <location>
        <position position="198"/>
    </location>
</feature>
<feature type="sequence variant" id="VAR_084399" description="In DEE87; dbSNP:rs1779472995." evidence="6">
    <original>R</original>
    <variation>W</variation>
    <location>
        <position position="200"/>
    </location>
</feature>
<dbReference type="EC" id="2.7.11.22"/>
<dbReference type="EMBL" id="AY028424">
    <property type="protein sequence ID" value="AAK27731.1"/>
    <property type="molecule type" value="mRNA"/>
</dbReference>
<dbReference type="EMBL" id="Z84480">
    <property type="status" value="NOT_ANNOTATED_CDS"/>
    <property type="molecule type" value="Genomic_DNA"/>
</dbReference>
<dbReference type="EMBL" id="AL512430">
    <property type="status" value="NOT_ANNOTATED_CDS"/>
    <property type="molecule type" value="Genomic_DNA"/>
</dbReference>
<dbReference type="EMBL" id="AL603914">
    <property type="status" value="NOT_ANNOTATED_CDS"/>
    <property type="molecule type" value="Genomic_DNA"/>
</dbReference>
<dbReference type="EMBL" id="BC024247">
    <property type="protein sequence ID" value="AAH24247.1"/>
    <property type="status" value="ALT_INIT"/>
    <property type="molecule type" value="mRNA"/>
</dbReference>
<dbReference type="EMBL" id="BC037289">
    <property type="protein sequence ID" value="AAH37289.1"/>
    <property type="molecule type" value="mRNA"/>
</dbReference>
<dbReference type="EMBL" id="AB028951">
    <property type="protein sequence ID" value="BAA82980.2"/>
    <property type="molecule type" value="mRNA"/>
</dbReference>
<dbReference type="CCDS" id="CCDS5085.1">
    <molecule id="Q9BWU1-1"/>
</dbReference>
<dbReference type="CCDS" id="CCDS75503.1">
    <molecule id="Q9BWU1-2"/>
</dbReference>
<dbReference type="RefSeq" id="NP_001287889.1">
    <property type="nucleotide sequence ID" value="NM_001300960.1"/>
</dbReference>
<dbReference type="RefSeq" id="NP_001287892.1">
    <molecule id="Q9BWU1-2"/>
    <property type="nucleotide sequence ID" value="NM_001300963.2"/>
</dbReference>
<dbReference type="RefSeq" id="NP_001287893.1">
    <molecule id="Q9BWU1-2"/>
    <property type="nucleotide sequence ID" value="NM_001300964.2"/>
</dbReference>
<dbReference type="RefSeq" id="NP_055891.1">
    <molecule id="Q9BWU1-1"/>
    <property type="nucleotide sequence ID" value="NM_015076.5"/>
</dbReference>
<dbReference type="RefSeq" id="XP_024302144.2">
    <molecule id="Q9BWU1-2"/>
    <property type="nucleotide sequence ID" value="XM_024446376.2"/>
</dbReference>
<dbReference type="RefSeq" id="XP_024302145.1">
    <molecule id="Q9BWU1-2"/>
    <property type="nucleotide sequence ID" value="XM_024446377.2"/>
</dbReference>
<dbReference type="RefSeq" id="XP_024302146.1">
    <molecule id="Q9BWU1-2"/>
    <property type="nucleotide sequence ID" value="XM_024446378.2"/>
</dbReference>
<dbReference type="RefSeq" id="XP_024302148.1">
    <molecule id="Q9BWU1-2"/>
    <property type="nucleotide sequence ID" value="XM_024446380.2"/>
</dbReference>
<dbReference type="RefSeq" id="XP_047274423.1">
    <molecule id="Q9BWU1-2"/>
    <property type="nucleotide sequence ID" value="XM_047418467.1"/>
</dbReference>
<dbReference type="RefSeq" id="XP_047274424.1">
    <molecule id="Q9BWU1-2"/>
    <property type="nucleotide sequence ID" value="XM_047418468.1"/>
</dbReference>
<dbReference type="RefSeq" id="XP_054210782.1">
    <molecule id="Q9BWU1-2"/>
    <property type="nucleotide sequence ID" value="XM_054354807.1"/>
</dbReference>
<dbReference type="RefSeq" id="XP_054210783.1">
    <molecule id="Q9BWU1-2"/>
    <property type="nucleotide sequence ID" value="XM_054354808.1"/>
</dbReference>
<dbReference type="RefSeq" id="XP_054210784.1">
    <molecule id="Q9BWU1-2"/>
    <property type="nucleotide sequence ID" value="XM_054354809.1"/>
</dbReference>
<dbReference type="RefSeq" id="XP_054210785.1">
    <molecule id="Q9BWU1-2"/>
    <property type="nucleotide sequence ID" value="XM_054354810.1"/>
</dbReference>
<dbReference type="RefSeq" id="XP_054210786.1">
    <molecule id="Q9BWU1-2"/>
    <property type="nucleotide sequence ID" value="XM_054354811.1"/>
</dbReference>
<dbReference type="RefSeq" id="XP_054210794.1">
    <molecule id="Q9BWU1-2"/>
    <property type="nucleotide sequence ID" value="XM_054354819.1"/>
</dbReference>
<dbReference type="SMR" id="Q9BWU1"/>
<dbReference type="BioGRID" id="116725">
    <property type="interactions" value="87"/>
</dbReference>
<dbReference type="ComplexPortal" id="CPX-3263">
    <property type="entry name" value="CKM complex variant 2"/>
</dbReference>
<dbReference type="CORUM" id="Q9BWU1"/>
<dbReference type="DIP" id="DIP-29013N"/>
<dbReference type="FunCoup" id="Q9BWU1">
    <property type="interactions" value="5056"/>
</dbReference>
<dbReference type="IntAct" id="Q9BWU1">
    <property type="interactions" value="58"/>
</dbReference>
<dbReference type="MINT" id="Q9BWU1"/>
<dbReference type="STRING" id="9606.ENSP00000357907"/>
<dbReference type="BindingDB" id="Q9BWU1"/>
<dbReference type="ChEMBL" id="CHEMBL6002"/>
<dbReference type="DrugBank" id="DB18107">
    <property type="generic name" value="SEL120-34A free base"/>
</dbReference>
<dbReference type="DrugCentral" id="Q9BWU1"/>
<dbReference type="GuidetoPHARMACOLOGY" id="1972"/>
<dbReference type="GlyGen" id="Q9BWU1">
    <property type="glycosylation" value="2 sites, 1 N-linked glycan (1 site)"/>
</dbReference>
<dbReference type="iPTMnet" id="Q9BWU1"/>
<dbReference type="PhosphoSitePlus" id="Q9BWU1"/>
<dbReference type="BioMuta" id="CDK19"/>
<dbReference type="DMDM" id="60391917"/>
<dbReference type="CPTAC" id="non-CPTAC-6017"/>
<dbReference type="jPOST" id="Q9BWU1"/>
<dbReference type="MassIVE" id="Q9BWU1"/>
<dbReference type="PaxDb" id="9606-ENSP00000357907"/>
<dbReference type="PeptideAtlas" id="Q9BWU1"/>
<dbReference type="ProteomicsDB" id="79317">
    <molecule id="Q9BWU1-1"/>
</dbReference>
<dbReference type="ProteomicsDB" id="79318">
    <molecule id="Q9BWU1-2"/>
</dbReference>
<dbReference type="Pumba" id="Q9BWU1"/>
<dbReference type="Antibodypedia" id="2087">
    <property type="antibodies" value="204 antibodies from 31 providers"/>
</dbReference>
<dbReference type="DNASU" id="23097"/>
<dbReference type="Ensembl" id="ENST00000323817.7">
    <molecule id="Q9BWU1-2"/>
    <property type="protein sequence ID" value="ENSP00000317665.3"/>
    <property type="gene ID" value="ENSG00000155111.15"/>
</dbReference>
<dbReference type="Ensembl" id="ENST00000368911.8">
    <molecule id="Q9BWU1-1"/>
    <property type="protein sequence ID" value="ENSP00000357907.3"/>
    <property type="gene ID" value="ENSG00000155111.15"/>
</dbReference>
<dbReference type="GeneID" id="23097"/>
<dbReference type="KEGG" id="hsa:23097"/>
<dbReference type="MANE-Select" id="ENST00000368911.8">
    <property type="protein sequence ID" value="ENSP00000357907.3"/>
    <property type="RefSeq nucleotide sequence ID" value="NM_015076.5"/>
    <property type="RefSeq protein sequence ID" value="NP_055891.1"/>
</dbReference>
<dbReference type="UCSC" id="uc003puh.2">
    <molecule id="Q9BWU1-1"/>
    <property type="organism name" value="human"/>
</dbReference>
<dbReference type="AGR" id="HGNC:19338"/>
<dbReference type="CTD" id="23097"/>
<dbReference type="DisGeNET" id="23097"/>
<dbReference type="GeneCards" id="CDK19"/>
<dbReference type="HGNC" id="HGNC:19338">
    <property type="gene designation" value="CDK19"/>
</dbReference>
<dbReference type="HPA" id="ENSG00000155111">
    <property type="expression patterns" value="Low tissue specificity"/>
</dbReference>
<dbReference type="MalaCards" id="CDK19"/>
<dbReference type="MIM" id="614720">
    <property type="type" value="gene"/>
</dbReference>
<dbReference type="MIM" id="618916">
    <property type="type" value="phenotype"/>
</dbReference>
<dbReference type="neXtProt" id="NX_Q9BWU1"/>
<dbReference type="OpenTargets" id="ENSG00000155111"/>
<dbReference type="Orphanet" id="442835">
    <property type="disease" value="Non-specific early-onset epileptic encephalopathy"/>
</dbReference>
<dbReference type="PharmGKB" id="PA165617767"/>
<dbReference type="VEuPathDB" id="HostDB:ENSG00000155111"/>
<dbReference type="eggNOG" id="KOG0666">
    <property type="taxonomic scope" value="Eukaryota"/>
</dbReference>
<dbReference type="GeneTree" id="ENSGT00940000158213"/>
<dbReference type="HOGENOM" id="CLU_000288_181_6_1"/>
<dbReference type="InParanoid" id="Q9BWU1"/>
<dbReference type="OMA" id="IXIWAIG"/>
<dbReference type="OrthoDB" id="6284126at2759"/>
<dbReference type="PAN-GO" id="Q9BWU1">
    <property type="GO annotations" value="6 GO annotations based on evolutionary models"/>
</dbReference>
<dbReference type="PhylomeDB" id="Q9BWU1"/>
<dbReference type="TreeFam" id="TF101025"/>
<dbReference type="PathwayCommons" id="Q9BWU1"/>
<dbReference type="Reactome" id="R-HSA-1989781">
    <property type="pathway name" value="PPARA activates gene expression"/>
</dbReference>
<dbReference type="Reactome" id="R-HSA-381340">
    <property type="pathway name" value="Transcriptional regulation of white adipocyte differentiation"/>
</dbReference>
<dbReference type="Reactome" id="R-HSA-9833110">
    <property type="pathway name" value="RSV-host interactions"/>
</dbReference>
<dbReference type="SignaLink" id="Q9BWU1"/>
<dbReference type="SIGNOR" id="Q9BWU1"/>
<dbReference type="BioGRID-ORCS" id="23097">
    <property type="hits" value="9 hits in 1168 CRISPR screens"/>
</dbReference>
<dbReference type="ChiTaRS" id="CDK19">
    <property type="organism name" value="human"/>
</dbReference>
<dbReference type="GenomeRNAi" id="23097"/>
<dbReference type="Pharos" id="Q9BWU1">
    <property type="development level" value="Tchem"/>
</dbReference>
<dbReference type="PRO" id="PR:Q9BWU1"/>
<dbReference type="Proteomes" id="UP000005640">
    <property type="component" value="Chromosome 6"/>
</dbReference>
<dbReference type="RNAct" id="Q9BWU1">
    <property type="molecule type" value="protein"/>
</dbReference>
<dbReference type="Bgee" id="ENSG00000155111">
    <property type="expression patterns" value="Expressed in endothelial cell and 200 other cell types or tissues"/>
</dbReference>
<dbReference type="ExpressionAtlas" id="Q9BWU1">
    <property type="expression patterns" value="baseline and differential"/>
</dbReference>
<dbReference type="GO" id="GO:1990508">
    <property type="term" value="C:CKM complex"/>
    <property type="evidence" value="ECO:0000250"/>
    <property type="project" value="ComplexPortal"/>
</dbReference>
<dbReference type="GO" id="GO:0005829">
    <property type="term" value="C:cytosol"/>
    <property type="evidence" value="ECO:0000314"/>
    <property type="project" value="HPA"/>
</dbReference>
<dbReference type="GO" id="GO:0005654">
    <property type="term" value="C:nucleoplasm"/>
    <property type="evidence" value="ECO:0000314"/>
    <property type="project" value="HPA"/>
</dbReference>
<dbReference type="GO" id="GO:0005634">
    <property type="term" value="C:nucleus"/>
    <property type="evidence" value="ECO:0000318"/>
    <property type="project" value="GO_Central"/>
</dbReference>
<dbReference type="GO" id="GO:0048471">
    <property type="term" value="C:perinuclear region of cytoplasm"/>
    <property type="evidence" value="ECO:0007669"/>
    <property type="project" value="UniProtKB-SubCell"/>
</dbReference>
<dbReference type="GO" id="GO:0005524">
    <property type="term" value="F:ATP binding"/>
    <property type="evidence" value="ECO:0007669"/>
    <property type="project" value="UniProtKB-KW"/>
</dbReference>
<dbReference type="GO" id="GO:0004693">
    <property type="term" value="F:cyclin-dependent protein serine/threonine kinase activity"/>
    <property type="evidence" value="ECO:0007669"/>
    <property type="project" value="UniProtKB-EC"/>
</dbReference>
<dbReference type="GO" id="GO:0106310">
    <property type="term" value="F:protein serine kinase activity"/>
    <property type="evidence" value="ECO:0007669"/>
    <property type="project" value="RHEA"/>
</dbReference>
<dbReference type="GO" id="GO:0004674">
    <property type="term" value="F:protein serine/threonine kinase activity"/>
    <property type="evidence" value="ECO:0000318"/>
    <property type="project" value="GO_Central"/>
</dbReference>
<dbReference type="GO" id="GO:0071222">
    <property type="term" value="P:cellular response to lipopolysaccharide"/>
    <property type="evidence" value="ECO:0007669"/>
    <property type="project" value="Ensembl"/>
</dbReference>
<dbReference type="GO" id="GO:0043065">
    <property type="term" value="P:positive regulation of apoptotic process"/>
    <property type="evidence" value="ECO:0007669"/>
    <property type="project" value="Ensembl"/>
</dbReference>
<dbReference type="CDD" id="cd07867">
    <property type="entry name" value="STKc_CDC2L6"/>
    <property type="match status" value="1"/>
</dbReference>
<dbReference type="FunFam" id="1.10.510.10:FF:000088">
    <property type="entry name" value="cyclin-dependent kinase 8 isoform X1"/>
    <property type="match status" value="1"/>
</dbReference>
<dbReference type="FunFam" id="3.30.200.20:FF:000122">
    <property type="entry name" value="cyclin-dependent kinase 8 isoform X1"/>
    <property type="match status" value="1"/>
</dbReference>
<dbReference type="Gene3D" id="3.30.200.20">
    <property type="entry name" value="Phosphorylase Kinase, domain 1"/>
    <property type="match status" value="1"/>
</dbReference>
<dbReference type="Gene3D" id="1.10.510.10">
    <property type="entry name" value="Transferase(Phosphotransferase) domain 1"/>
    <property type="match status" value="1"/>
</dbReference>
<dbReference type="InterPro" id="IPR050108">
    <property type="entry name" value="CDK"/>
</dbReference>
<dbReference type="InterPro" id="IPR011009">
    <property type="entry name" value="Kinase-like_dom_sf"/>
</dbReference>
<dbReference type="InterPro" id="IPR000719">
    <property type="entry name" value="Prot_kinase_dom"/>
</dbReference>
<dbReference type="InterPro" id="IPR017441">
    <property type="entry name" value="Protein_kinase_ATP_BS"/>
</dbReference>
<dbReference type="InterPro" id="IPR008271">
    <property type="entry name" value="Ser/Thr_kinase_AS"/>
</dbReference>
<dbReference type="PANTHER" id="PTHR24056">
    <property type="entry name" value="CELL DIVISION PROTEIN KINASE"/>
    <property type="match status" value="1"/>
</dbReference>
<dbReference type="PANTHER" id="PTHR24056:SF570">
    <property type="entry name" value="CYCLIN-DEPENDENT KINASE 19"/>
    <property type="match status" value="1"/>
</dbReference>
<dbReference type="Pfam" id="PF00069">
    <property type="entry name" value="Pkinase"/>
    <property type="match status" value="1"/>
</dbReference>
<dbReference type="SMART" id="SM00220">
    <property type="entry name" value="S_TKc"/>
    <property type="match status" value="1"/>
</dbReference>
<dbReference type="SUPFAM" id="SSF56112">
    <property type="entry name" value="Protein kinase-like (PK-like)"/>
    <property type="match status" value="1"/>
</dbReference>
<dbReference type="PROSITE" id="PS00107">
    <property type="entry name" value="PROTEIN_KINASE_ATP"/>
    <property type="match status" value="1"/>
</dbReference>
<dbReference type="PROSITE" id="PS50011">
    <property type="entry name" value="PROTEIN_KINASE_DOM"/>
    <property type="match status" value="1"/>
</dbReference>
<dbReference type="PROSITE" id="PS00108">
    <property type="entry name" value="PROTEIN_KINASE_ST"/>
    <property type="match status" value="1"/>
</dbReference>
<gene>
    <name type="primary">CDK19</name>
    <name type="synonym">CDC2L6</name>
    <name type="synonym">CDK11</name>
    <name type="synonym">KIAA1028</name>
</gene>
<keyword id="KW-0007">Acetylation</keyword>
<keyword id="KW-0025">Alternative splicing</keyword>
<keyword id="KW-0067">ATP-binding</keyword>
<keyword id="KW-0963">Cytoplasm</keyword>
<keyword id="KW-0225">Disease variant</keyword>
<keyword id="KW-0887">Epilepsy</keyword>
<keyword id="KW-0418">Kinase</keyword>
<keyword id="KW-0547">Nucleotide-binding</keyword>
<keyword id="KW-0539">Nucleus</keyword>
<keyword id="KW-0597">Phosphoprotein</keyword>
<keyword id="KW-1267">Proteomics identification</keyword>
<keyword id="KW-1185">Reference proteome</keyword>
<keyword id="KW-0723">Serine/threonine-protein kinase</keyword>
<keyword id="KW-0808">Transferase</keyword>
<reference key="1">
    <citation type="submission" date="2001-03" db="EMBL/GenBank/DDBJ databases">
        <title>Delayed onset of apoptosis in factor-dependent T cells expressing a novel cyclin-C associated kinase.</title>
        <authorList>
            <person name="Lan Y."/>
            <person name="Zhang H."/>
            <person name="Lin F."/>
            <person name="Smith C."/>
            <person name="Xu H."/>
        </authorList>
    </citation>
    <scope>NUCLEOTIDE SEQUENCE [MRNA] (ISOFORM 1)</scope>
</reference>
<reference key="2">
    <citation type="journal article" date="2003" name="Nature">
        <title>The DNA sequence and analysis of human chromosome 6.</title>
        <authorList>
            <person name="Mungall A.J."/>
            <person name="Palmer S.A."/>
            <person name="Sims S.K."/>
            <person name="Edwards C.A."/>
            <person name="Ashurst J.L."/>
            <person name="Wilming L."/>
            <person name="Jones M.C."/>
            <person name="Horton R."/>
            <person name="Hunt S.E."/>
            <person name="Scott C.E."/>
            <person name="Gilbert J.G.R."/>
            <person name="Clamp M.E."/>
            <person name="Bethel G."/>
            <person name="Milne S."/>
            <person name="Ainscough R."/>
            <person name="Almeida J.P."/>
            <person name="Ambrose K.D."/>
            <person name="Andrews T.D."/>
            <person name="Ashwell R.I.S."/>
            <person name="Babbage A.K."/>
            <person name="Bagguley C.L."/>
            <person name="Bailey J."/>
            <person name="Banerjee R."/>
            <person name="Barker D.J."/>
            <person name="Barlow K.F."/>
            <person name="Bates K."/>
            <person name="Beare D.M."/>
            <person name="Beasley H."/>
            <person name="Beasley O."/>
            <person name="Bird C.P."/>
            <person name="Blakey S.E."/>
            <person name="Bray-Allen S."/>
            <person name="Brook J."/>
            <person name="Brown A.J."/>
            <person name="Brown J.Y."/>
            <person name="Burford D.C."/>
            <person name="Burrill W."/>
            <person name="Burton J."/>
            <person name="Carder C."/>
            <person name="Carter N.P."/>
            <person name="Chapman J.C."/>
            <person name="Clark S.Y."/>
            <person name="Clark G."/>
            <person name="Clee C.M."/>
            <person name="Clegg S."/>
            <person name="Cobley V."/>
            <person name="Collier R.E."/>
            <person name="Collins J.E."/>
            <person name="Colman L.K."/>
            <person name="Corby N.R."/>
            <person name="Coville G.J."/>
            <person name="Culley K.M."/>
            <person name="Dhami P."/>
            <person name="Davies J."/>
            <person name="Dunn M."/>
            <person name="Earthrowl M.E."/>
            <person name="Ellington A.E."/>
            <person name="Evans K.A."/>
            <person name="Faulkner L."/>
            <person name="Francis M.D."/>
            <person name="Frankish A."/>
            <person name="Frankland J."/>
            <person name="French L."/>
            <person name="Garner P."/>
            <person name="Garnett J."/>
            <person name="Ghori M.J."/>
            <person name="Gilby L.M."/>
            <person name="Gillson C.J."/>
            <person name="Glithero R.J."/>
            <person name="Grafham D.V."/>
            <person name="Grant M."/>
            <person name="Gribble S."/>
            <person name="Griffiths C."/>
            <person name="Griffiths M.N.D."/>
            <person name="Hall R."/>
            <person name="Halls K.S."/>
            <person name="Hammond S."/>
            <person name="Harley J.L."/>
            <person name="Hart E.A."/>
            <person name="Heath P.D."/>
            <person name="Heathcott R."/>
            <person name="Holmes S.J."/>
            <person name="Howden P.J."/>
            <person name="Howe K.L."/>
            <person name="Howell G.R."/>
            <person name="Huckle E."/>
            <person name="Humphray S.J."/>
            <person name="Humphries M.D."/>
            <person name="Hunt A.R."/>
            <person name="Johnson C.M."/>
            <person name="Joy A.A."/>
            <person name="Kay M."/>
            <person name="Keenan S.J."/>
            <person name="Kimberley A.M."/>
            <person name="King A."/>
            <person name="Laird G.K."/>
            <person name="Langford C."/>
            <person name="Lawlor S."/>
            <person name="Leongamornlert D.A."/>
            <person name="Leversha M."/>
            <person name="Lloyd C.R."/>
            <person name="Lloyd D.M."/>
            <person name="Loveland J.E."/>
            <person name="Lovell J."/>
            <person name="Martin S."/>
            <person name="Mashreghi-Mohammadi M."/>
            <person name="Maslen G.L."/>
            <person name="Matthews L."/>
            <person name="McCann O.T."/>
            <person name="McLaren S.J."/>
            <person name="McLay K."/>
            <person name="McMurray A."/>
            <person name="Moore M.J.F."/>
            <person name="Mullikin J.C."/>
            <person name="Niblett D."/>
            <person name="Nickerson T."/>
            <person name="Novik K.L."/>
            <person name="Oliver K."/>
            <person name="Overton-Larty E.K."/>
            <person name="Parker A."/>
            <person name="Patel R."/>
            <person name="Pearce A.V."/>
            <person name="Peck A.I."/>
            <person name="Phillimore B.J.C.T."/>
            <person name="Phillips S."/>
            <person name="Plumb R.W."/>
            <person name="Porter K.M."/>
            <person name="Ramsey Y."/>
            <person name="Ranby S.A."/>
            <person name="Rice C.M."/>
            <person name="Ross M.T."/>
            <person name="Searle S.M."/>
            <person name="Sehra H.K."/>
            <person name="Sheridan E."/>
            <person name="Skuce C.D."/>
            <person name="Smith S."/>
            <person name="Smith M."/>
            <person name="Spraggon L."/>
            <person name="Squares S.L."/>
            <person name="Steward C.A."/>
            <person name="Sycamore N."/>
            <person name="Tamlyn-Hall G."/>
            <person name="Tester J."/>
            <person name="Theaker A.J."/>
            <person name="Thomas D.W."/>
            <person name="Thorpe A."/>
            <person name="Tracey A."/>
            <person name="Tromans A."/>
            <person name="Tubby B."/>
            <person name="Wall M."/>
            <person name="Wallis J.M."/>
            <person name="West A.P."/>
            <person name="White S.S."/>
            <person name="Whitehead S.L."/>
            <person name="Whittaker H."/>
            <person name="Wild A."/>
            <person name="Willey D.J."/>
            <person name="Wilmer T.E."/>
            <person name="Wood J.M."/>
            <person name="Wray P.W."/>
            <person name="Wyatt J.C."/>
            <person name="Young L."/>
            <person name="Younger R.M."/>
            <person name="Bentley D.R."/>
            <person name="Coulson A."/>
            <person name="Durbin R.M."/>
            <person name="Hubbard T."/>
            <person name="Sulston J.E."/>
            <person name="Dunham I."/>
            <person name="Rogers J."/>
            <person name="Beck S."/>
        </authorList>
    </citation>
    <scope>NUCLEOTIDE SEQUENCE [LARGE SCALE GENOMIC DNA]</scope>
</reference>
<reference key="3">
    <citation type="journal article" date="2004" name="Genome Res.">
        <title>The status, quality, and expansion of the NIH full-length cDNA project: the Mammalian Gene Collection (MGC).</title>
        <authorList>
            <consortium name="The MGC Project Team"/>
        </authorList>
    </citation>
    <scope>NUCLEOTIDE SEQUENCE [LARGE SCALE MRNA] (ISOFORMS 1 AND 2)</scope>
    <source>
        <tissue>Testis</tissue>
    </source>
</reference>
<reference key="4">
    <citation type="journal article" date="1999" name="DNA Res.">
        <title>Prediction of the coding sequences of unidentified human genes. XIV. The complete sequences of 100 new cDNA clones from brain which code for large proteins in vitro.</title>
        <authorList>
            <person name="Kikuno R."/>
            <person name="Nagase T."/>
            <person name="Ishikawa K."/>
            <person name="Hirosawa M."/>
            <person name="Miyajima N."/>
            <person name="Tanaka A."/>
            <person name="Kotani H."/>
            <person name="Nomura N."/>
            <person name="Ohara O."/>
        </authorList>
    </citation>
    <scope>NUCLEOTIDE SEQUENCE [LARGE SCALE MRNA] OF 2-502 (ISOFORM 1)</scope>
    <source>
        <tissue>Brain</tissue>
    </source>
</reference>
<reference key="5">
    <citation type="journal article" date="2002" name="DNA Res.">
        <title>Construction of expression-ready cDNA clones for KIAA genes: manual curation of 330 KIAA cDNA clones.</title>
        <authorList>
            <person name="Nakajima D."/>
            <person name="Okazaki N."/>
            <person name="Yamakawa H."/>
            <person name="Kikuno R."/>
            <person name="Ohara O."/>
            <person name="Nagase T."/>
        </authorList>
    </citation>
    <scope>SEQUENCE REVISION</scope>
</reference>
<reference key="6">
    <citation type="journal article" date="2008" name="Mol. Cell">
        <title>Kinase-selective enrichment enables quantitative phosphoproteomics of the kinome across the cell cycle.</title>
        <authorList>
            <person name="Daub H."/>
            <person name="Olsen J.V."/>
            <person name="Bairlein M."/>
            <person name="Gnad F."/>
            <person name="Oppermann F.S."/>
            <person name="Korner R."/>
            <person name="Greff Z."/>
            <person name="Keri G."/>
            <person name="Stemmann O."/>
            <person name="Mann M."/>
        </authorList>
    </citation>
    <scope>PHOSPHORYLATION [LARGE SCALE ANALYSIS] AT SER-449</scope>
    <scope>IDENTIFICATION BY MASS SPECTROMETRY [LARGE SCALE ANALYSIS]</scope>
    <source>
        <tissue>Cervix carcinoma</tissue>
    </source>
</reference>
<reference key="7">
    <citation type="journal article" date="2009" name="Mol. Cell. Proteomics">
        <title>Large-scale proteomics analysis of the human kinome.</title>
        <authorList>
            <person name="Oppermann F.S."/>
            <person name="Gnad F."/>
            <person name="Olsen J.V."/>
            <person name="Hornberger R."/>
            <person name="Greff Z."/>
            <person name="Keri G."/>
            <person name="Mann M."/>
            <person name="Daub H."/>
        </authorList>
    </citation>
    <scope>PHOSPHORYLATION [LARGE SCALE ANALYSIS] AT SER-449</scope>
    <scope>IDENTIFICATION BY MASS SPECTROMETRY [LARGE SCALE ANALYSIS]</scope>
</reference>
<reference key="8">
    <citation type="journal article" date="2012" name="Proc. Natl. Acad. Sci. U.S.A.">
        <title>N-terminal acetylome analyses and functional insights of the N-terminal acetyltransferase NatB.</title>
        <authorList>
            <person name="Van Damme P."/>
            <person name="Lasa M."/>
            <person name="Polevoda B."/>
            <person name="Gazquez C."/>
            <person name="Elosegui-Artola A."/>
            <person name="Kim D.S."/>
            <person name="De Juan-Pardo E."/>
            <person name="Demeyer K."/>
            <person name="Hole K."/>
            <person name="Larrea E."/>
            <person name="Timmerman E."/>
            <person name="Prieto J."/>
            <person name="Arnesen T."/>
            <person name="Sherman F."/>
            <person name="Gevaert K."/>
            <person name="Aldabe R."/>
        </authorList>
    </citation>
    <scope>ACETYLATION [LARGE SCALE ANALYSIS] AT MET-1</scope>
    <scope>IDENTIFICATION BY MASS SPECTROMETRY [LARGE SCALE ANALYSIS]</scope>
</reference>
<reference key="9">
    <citation type="journal article" date="2020" name="Am. J. Hum. Genet.">
        <title>De novo variants in CDK19 are associated with a syndrome involving intellectual disability and epileptic encephalopathy.</title>
        <authorList>
            <consortium name="Undiagnosed Diseases Network"/>
            <person name="Chung H.L."/>
            <person name="Mao X."/>
            <person name="Wang H."/>
            <person name="Park Y.J."/>
            <person name="Marcogliese P.C."/>
            <person name="Rosenfeld J.A."/>
            <person name="Burrage L.C."/>
            <person name="Liu P."/>
            <person name="Murdock D.R."/>
            <person name="Yamamoto S."/>
            <person name="Wangler M.F."/>
            <person name="Chao H.T."/>
            <person name="Long H."/>
            <person name="Feng L."/>
            <person name="Bacino C.A."/>
            <person name="Bellen H.J."/>
            <person name="Xiao B."/>
        </authorList>
    </citation>
    <scope>INVOLVEMENT IN DEE87</scope>
    <scope>SUBCELLULAR LOCATION</scope>
    <scope>VARIANTS DEE87 HIS-32 AND ALA-196</scope>
    <scope>CHARACTERIZATION OF VARIANTS DEE87 HIS-32 AND ALA-196</scope>
</reference>
<reference key="10">
    <citation type="journal article" date="2020" name="Neurol. Genet.">
        <title>Cerebrospinal fluid abnormalities in developmental and epileptic encephalopathy with a de novo CDK19 variant.</title>
        <authorList>
            <person name="Sugawara Y."/>
            <person name="Mizuno T."/>
            <person name="Moriyama K."/>
            <person name="Ishiwata H."/>
            <person name="Kato M."/>
            <person name="Nakashima M."/>
            <person name="Mizuguchi T."/>
            <person name="Matsumoto N."/>
        </authorList>
    </citation>
    <scope>VARIANT DEE87 HIS-32</scope>
</reference>
<reference key="11">
    <citation type="journal article" date="2021" name="Genet. Med.">
        <title>CDK19-related disorder results from both loss-of-function and gain-of-function de novo missense variants.</title>
        <authorList>
            <person name="Zarate Y.A."/>
            <person name="Uehara T."/>
            <person name="Abe K."/>
            <person name="Oginuma M."/>
            <person name="Harako S."/>
            <person name="Ishitani S."/>
            <person name="Lehesjoki A.E."/>
            <person name="Bierhals T."/>
            <person name="Kloth K."/>
            <person name="Ehmke N."/>
            <person name="Horn D."/>
            <person name="Holtgrewe M."/>
            <person name="Anderson K."/>
            <person name="Viskochil D."/>
            <person name="Edgar-Zarate C.L."/>
            <person name="Sacoto M.J.G."/>
            <person name="Schnur R.E."/>
            <person name="Morrow M.M."/>
            <person name="Sanchez-Valle A."/>
            <person name="Pappas J."/>
            <person name="Rabin R."/>
            <person name="Muona M."/>
            <person name="Anttonen A.K."/>
            <person name="Platzer K."/>
            <person name="Luppe J."/>
            <person name="Gburek-Augustat J."/>
            <person name="Kaname T."/>
            <person name="Okamoto N."/>
            <person name="Mizuno S."/>
            <person name="Kaido Y."/>
            <person name="Ohkuma Y."/>
            <person name="Hirose Y."/>
            <person name="Ishitani T."/>
            <person name="Kosaki K."/>
        </authorList>
    </citation>
    <scope>VARIANTS DEE87 ALA-28; ARG-28; CYS-32; HIS-32; LEU-197; CYS-198 AND TRP-200</scope>
    <scope>CHARACTERIZATION OF VARIANTS DEE87 ARG-28 AND HIS-32</scope>
</reference>
<name>CDK19_HUMAN</name>